<dbReference type="EMBL" id="CP000436">
    <property type="protein sequence ID" value="ABI25584.1"/>
    <property type="molecule type" value="Genomic_DNA"/>
</dbReference>
<dbReference type="SMR" id="Q0I4S4"/>
<dbReference type="KEGG" id="hso:HS_1309"/>
<dbReference type="eggNOG" id="COG0718">
    <property type="taxonomic scope" value="Bacteria"/>
</dbReference>
<dbReference type="HOGENOM" id="CLU_140930_0_0_6"/>
<dbReference type="GO" id="GO:0043590">
    <property type="term" value="C:bacterial nucleoid"/>
    <property type="evidence" value="ECO:0007669"/>
    <property type="project" value="UniProtKB-UniRule"/>
</dbReference>
<dbReference type="GO" id="GO:0005829">
    <property type="term" value="C:cytosol"/>
    <property type="evidence" value="ECO:0007669"/>
    <property type="project" value="TreeGrafter"/>
</dbReference>
<dbReference type="GO" id="GO:0003677">
    <property type="term" value="F:DNA binding"/>
    <property type="evidence" value="ECO:0007669"/>
    <property type="project" value="UniProtKB-UniRule"/>
</dbReference>
<dbReference type="FunFam" id="3.30.1310.10:FF:000001">
    <property type="entry name" value="Nucleoid-associated protein YbaB"/>
    <property type="match status" value="1"/>
</dbReference>
<dbReference type="Gene3D" id="3.30.1310.10">
    <property type="entry name" value="Nucleoid-associated protein YbaB-like domain"/>
    <property type="match status" value="1"/>
</dbReference>
<dbReference type="HAMAP" id="MF_00274">
    <property type="entry name" value="DNA_YbaB_EbfC"/>
    <property type="match status" value="1"/>
</dbReference>
<dbReference type="InterPro" id="IPR036894">
    <property type="entry name" value="YbaB-like_sf"/>
</dbReference>
<dbReference type="InterPro" id="IPR004401">
    <property type="entry name" value="YbaB/EbfC"/>
</dbReference>
<dbReference type="NCBIfam" id="TIGR00103">
    <property type="entry name" value="DNA_YbaB_EbfC"/>
    <property type="match status" value="1"/>
</dbReference>
<dbReference type="PANTHER" id="PTHR33449">
    <property type="entry name" value="NUCLEOID-ASSOCIATED PROTEIN YBAB"/>
    <property type="match status" value="1"/>
</dbReference>
<dbReference type="PANTHER" id="PTHR33449:SF1">
    <property type="entry name" value="NUCLEOID-ASSOCIATED PROTEIN YBAB"/>
    <property type="match status" value="1"/>
</dbReference>
<dbReference type="Pfam" id="PF02575">
    <property type="entry name" value="YbaB_DNA_bd"/>
    <property type="match status" value="1"/>
</dbReference>
<dbReference type="PIRSF" id="PIRSF004555">
    <property type="entry name" value="UCP004555"/>
    <property type="match status" value="1"/>
</dbReference>
<dbReference type="SUPFAM" id="SSF82607">
    <property type="entry name" value="YbaB-like"/>
    <property type="match status" value="1"/>
</dbReference>
<comment type="function">
    <text evidence="1">Binds to DNA and alters its conformation. May be involved in regulation of gene expression, nucleoid organization and DNA protection.</text>
</comment>
<comment type="subunit">
    <text evidence="1">Homodimer.</text>
</comment>
<comment type="subcellular location">
    <subcellularLocation>
        <location evidence="1">Cytoplasm</location>
        <location evidence="1">Nucleoid</location>
    </subcellularLocation>
</comment>
<comment type="similarity">
    <text evidence="1">Belongs to the YbaB/EbfC family.</text>
</comment>
<protein>
    <recommendedName>
        <fullName evidence="1">Nucleoid-associated protein HS_1309</fullName>
    </recommendedName>
</protein>
<feature type="chain" id="PRO_1000003749" description="Nucleoid-associated protein HS_1309">
    <location>
        <begin position="1"/>
        <end position="109"/>
    </location>
</feature>
<proteinExistence type="inferred from homology"/>
<keyword id="KW-0963">Cytoplasm</keyword>
<keyword id="KW-0238">DNA-binding</keyword>
<sequence length="109" mass="12046">MFGKGGLGNLMKQAQQMQERMQKMQEEIAQLEVTGEAGAGLIKVTINGAHNCRRIDIDPSLMEDDKEMLEDLIAAAFNDAVRRAEEMQKEKMASVTAGMSLPPGFKMPF</sequence>
<accession>Q0I4S4</accession>
<evidence type="ECO:0000255" key="1">
    <source>
        <dbReference type="HAMAP-Rule" id="MF_00274"/>
    </source>
</evidence>
<gene>
    <name type="ordered locus">HS_1309</name>
</gene>
<organism>
    <name type="scientific">Histophilus somni (strain 129Pt)</name>
    <name type="common">Haemophilus somnus</name>
    <dbReference type="NCBI Taxonomy" id="205914"/>
    <lineage>
        <taxon>Bacteria</taxon>
        <taxon>Pseudomonadati</taxon>
        <taxon>Pseudomonadota</taxon>
        <taxon>Gammaproteobacteria</taxon>
        <taxon>Pasteurellales</taxon>
        <taxon>Pasteurellaceae</taxon>
        <taxon>Histophilus</taxon>
    </lineage>
</organism>
<reference key="1">
    <citation type="journal article" date="2007" name="J. Bacteriol.">
        <title>Complete genome sequence of Haemophilus somnus (Histophilus somni) strain 129Pt and comparison to Haemophilus ducreyi 35000HP and Haemophilus influenzae Rd.</title>
        <authorList>
            <person name="Challacombe J.F."/>
            <person name="Duncan A.J."/>
            <person name="Brettin T.S."/>
            <person name="Bruce D."/>
            <person name="Chertkov O."/>
            <person name="Detter J.C."/>
            <person name="Han C.S."/>
            <person name="Misra M."/>
            <person name="Richardson P."/>
            <person name="Tapia R."/>
            <person name="Thayer N."/>
            <person name="Xie G."/>
            <person name="Inzana T.J."/>
        </authorList>
    </citation>
    <scope>NUCLEOTIDE SEQUENCE [LARGE SCALE GENOMIC DNA]</scope>
    <source>
        <strain>129Pt</strain>
    </source>
</reference>
<name>Y1309_HISS1</name>